<reference key="1">
    <citation type="journal article" date="2002" name="Cell">
        <title>Hop is an unusual homeobox gene that modulates cardiac development.</title>
        <authorList>
            <person name="Chen F."/>
            <person name="Kook H."/>
            <person name="Milewski R."/>
            <person name="Gitler A.D."/>
            <person name="Lu M.M."/>
            <person name="Li J."/>
            <person name="Nazarian R."/>
            <person name="Schnepp R."/>
            <person name="Jen K."/>
            <person name="Biben C."/>
            <person name="Runke G."/>
            <person name="Mackay J.P."/>
            <person name="Novotny J."/>
            <person name="Schwartz R.J."/>
            <person name="Harvey R.P."/>
            <person name="Mullins M.C."/>
            <person name="Epstein J.A."/>
        </authorList>
    </citation>
    <scope>NUCLEOTIDE SEQUENCE [MRNA]</scope>
    <scope>FUNCTION</scope>
    <scope>SUBCELLULAR LOCATION</scope>
    <scope>TISSUE SPECIFICITY</scope>
    <scope>DEVELOPMENTAL STAGE</scope>
    <scope>INDUCTION</scope>
    <scope>INTERACTION WITH SRF</scope>
    <scope>MUTAGENESIS OF 35-LEU--GLU-39 AND 49-LYS--GLN-53</scope>
    <scope>DISRUPTION PHENOTYPE</scope>
    <source>
        <strain>NIH Swiss</strain>
    </source>
</reference>
<reference key="2">
    <citation type="journal article" date="2002" name="Cell">
        <title>Modulation of cardiac growth and development by HOP, an unusual homeodomain protein.</title>
        <authorList>
            <person name="Shin C.H."/>
            <person name="Liu Z.-P."/>
            <person name="Passier R."/>
            <person name="Zhang C.-L."/>
            <person name="Wang D.-Z."/>
            <person name="Harris T.M."/>
            <person name="Yamagishi H."/>
            <person name="Richardson J.A."/>
            <person name="Childs G."/>
            <person name="Olson E.N."/>
        </authorList>
    </citation>
    <scope>NUCLEOTIDE SEQUENCE [MRNA]</scope>
    <scope>FUNCTION</scope>
    <scope>TISSUE SPECIFICITY</scope>
    <scope>DEVELOPMENTAL STAGE</scope>
    <scope>INTERACTION WITH SRF</scope>
    <scope>DISRUPTION PHENOTYPE</scope>
    <source>
        <strain>C57BL/6J</strain>
        <tissue>Heart</tissue>
    </source>
</reference>
<reference key="3">
    <citation type="journal article" date="2002" name="Mech. Dev.">
        <title>Expression of mOb1, a novel atypical 73 amino acid K50-homeodomain protein, during mouse development.</title>
        <authorList>
            <person name="Adu J."/>
            <person name="Leong F.T."/>
            <person name="Smith N.R."/>
            <person name="Leek J.P."/>
            <person name="Markham A.F."/>
            <person name="Robinson P.A."/>
            <person name="Mighell A.J."/>
        </authorList>
    </citation>
    <scope>NUCLEOTIDE SEQUENCE [MRNA]</scope>
    <scope>SUBCELLULAR LOCATION</scope>
    <scope>TISSUE SPECIFICITY</scope>
    <scope>DEVELOPMENTAL STAGE</scope>
    <source>
        <strain>CD-1</strain>
    </source>
</reference>
<reference key="4">
    <citation type="journal article" date="2005" name="Science">
        <title>The transcriptional landscape of the mammalian genome.</title>
        <authorList>
            <person name="Carninci P."/>
            <person name="Kasukawa T."/>
            <person name="Katayama S."/>
            <person name="Gough J."/>
            <person name="Frith M.C."/>
            <person name="Maeda N."/>
            <person name="Oyama R."/>
            <person name="Ravasi T."/>
            <person name="Lenhard B."/>
            <person name="Wells C."/>
            <person name="Kodzius R."/>
            <person name="Shimokawa K."/>
            <person name="Bajic V.B."/>
            <person name="Brenner S.E."/>
            <person name="Batalov S."/>
            <person name="Forrest A.R."/>
            <person name="Zavolan M."/>
            <person name="Davis M.J."/>
            <person name="Wilming L.G."/>
            <person name="Aidinis V."/>
            <person name="Allen J.E."/>
            <person name="Ambesi-Impiombato A."/>
            <person name="Apweiler R."/>
            <person name="Aturaliya R.N."/>
            <person name="Bailey T.L."/>
            <person name="Bansal M."/>
            <person name="Baxter L."/>
            <person name="Beisel K.W."/>
            <person name="Bersano T."/>
            <person name="Bono H."/>
            <person name="Chalk A.M."/>
            <person name="Chiu K.P."/>
            <person name="Choudhary V."/>
            <person name="Christoffels A."/>
            <person name="Clutterbuck D.R."/>
            <person name="Crowe M.L."/>
            <person name="Dalla E."/>
            <person name="Dalrymple B.P."/>
            <person name="de Bono B."/>
            <person name="Della Gatta G."/>
            <person name="di Bernardo D."/>
            <person name="Down T."/>
            <person name="Engstrom P."/>
            <person name="Fagiolini M."/>
            <person name="Faulkner G."/>
            <person name="Fletcher C.F."/>
            <person name="Fukushima T."/>
            <person name="Furuno M."/>
            <person name="Futaki S."/>
            <person name="Gariboldi M."/>
            <person name="Georgii-Hemming P."/>
            <person name="Gingeras T.R."/>
            <person name="Gojobori T."/>
            <person name="Green R.E."/>
            <person name="Gustincich S."/>
            <person name="Harbers M."/>
            <person name="Hayashi Y."/>
            <person name="Hensch T.K."/>
            <person name="Hirokawa N."/>
            <person name="Hill D."/>
            <person name="Huminiecki L."/>
            <person name="Iacono M."/>
            <person name="Ikeo K."/>
            <person name="Iwama A."/>
            <person name="Ishikawa T."/>
            <person name="Jakt M."/>
            <person name="Kanapin A."/>
            <person name="Katoh M."/>
            <person name="Kawasawa Y."/>
            <person name="Kelso J."/>
            <person name="Kitamura H."/>
            <person name="Kitano H."/>
            <person name="Kollias G."/>
            <person name="Krishnan S.P."/>
            <person name="Kruger A."/>
            <person name="Kummerfeld S.K."/>
            <person name="Kurochkin I.V."/>
            <person name="Lareau L.F."/>
            <person name="Lazarevic D."/>
            <person name="Lipovich L."/>
            <person name="Liu J."/>
            <person name="Liuni S."/>
            <person name="McWilliam S."/>
            <person name="Madan Babu M."/>
            <person name="Madera M."/>
            <person name="Marchionni L."/>
            <person name="Matsuda H."/>
            <person name="Matsuzawa S."/>
            <person name="Miki H."/>
            <person name="Mignone F."/>
            <person name="Miyake S."/>
            <person name="Morris K."/>
            <person name="Mottagui-Tabar S."/>
            <person name="Mulder N."/>
            <person name="Nakano N."/>
            <person name="Nakauchi H."/>
            <person name="Ng P."/>
            <person name="Nilsson R."/>
            <person name="Nishiguchi S."/>
            <person name="Nishikawa S."/>
            <person name="Nori F."/>
            <person name="Ohara O."/>
            <person name="Okazaki Y."/>
            <person name="Orlando V."/>
            <person name="Pang K.C."/>
            <person name="Pavan W.J."/>
            <person name="Pavesi G."/>
            <person name="Pesole G."/>
            <person name="Petrovsky N."/>
            <person name="Piazza S."/>
            <person name="Reed J."/>
            <person name="Reid J.F."/>
            <person name="Ring B.Z."/>
            <person name="Ringwald M."/>
            <person name="Rost B."/>
            <person name="Ruan Y."/>
            <person name="Salzberg S.L."/>
            <person name="Sandelin A."/>
            <person name="Schneider C."/>
            <person name="Schoenbach C."/>
            <person name="Sekiguchi K."/>
            <person name="Semple C.A."/>
            <person name="Seno S."/>
            <person name="Sessa L."/>
            <person name="Sheng Y."/>
            <person name="Shibata Y."/>
            <person name="Shimada H."/>
            <person name="Shimada K."/>
            <person name="Silva D."/>
            <person name="Sinclair B."/>
            <person name="Sperling S."/>
            <person name="Stupka E."/>
            <person name="Sugiura K."/>
            <person name="Sultana R."/>
            <person name="Takenaka Y."/>
            <person name="Taki K."/>
            <person name="Tammoja K."/>
            <person name="Tan S.L."/>
            <person name="Tang S."/>
            <person name="Taylor M.S."/>
            <person name="Tegner J."/>
            <person name="Teichmann S.A."/>
            <person name="Ueda H.R."/>
            <person name="van Nimwegen E."/>
            <person name="Verardo R."/>
            <person name="Wei C.L."/>
            <person name="Yagi K."/>
            <person name="Yamanishi H."/>
            <person name="Zabarovsky E."/>
            <person name="Zhu S."/>
            <person name="Zimmer A."/>
            <person name="Hide W."/>
            <person name="Bult C."/>
            <person name="Grimmond S.M."/>
            <person name="Teasdale R.D."/>
            <person name="Liu E.T."/>
            <person name="Brusic V."/>
            <person name="Quackenbush J."/>
            <person name="Wahlestedt C."/>
            <person name="Mattick J.S."/>
            <person name="Hume D.A."/>
            <person name="Kai C."/>
            <person name="Sasaki D."/>
            <person name="Tomaru Y."/>
            <person name="Fukuda S."/>
            <person name="Kanamori-Katayama M."/>
            <person name="Suzuki M."/>
            <person name="Aoki J."/>
            <person name="Arakawa T."/>
            <person name="Iida J."/>
            <person name="Imamura K."/>
            <person name="Itoh M."/>
            <person name="Kato T."/>
            <person name="Kawaji H."/>
            <person name="Kawagashira N."/>
            <person name="Kawashima T."/>
            <person name="Kojima M."/>
            <person name="Kondo S."/>
            <person name="Konno H."/>
            <person name="Nakano K."/>
            <person name="Ninomiya N."/>
            <person name="Nishio T."/>
            <person name="Okada M."/>
            <person name="Plessy C."/>
            <person name="Shibata K."/>
            <person name="Shiraki T."/>
            <person name="Suzuki S."/>
            <person name="Tagami M."/>
            <person name="Waki K."/>
            <person name="Watahiki A."/>
            <person name="Okamura-Oho Y."/>
            <person name="Suzuki H."/>
            <person name="Kawai J."/>
            <person name="Hayashizaki Y."/>
        </authorList>
    </citation>
    <scope>NUCLEOTIDE SEQUENCE [LARGE SCALE MRNA]</scope>
    <source>
        <strain>C57BL/6J</strain>
        <tissue>Lung</tissue>
        <tissue>Small intestine</tissue>
        <tissue>Tongue</tissue>
    </source>
</reference>
<reference key="5">
    <citation type="journal article" date="2004" name="Genome Res.">
        <title>The status, quality, and expansion of the NIH full-length cDNA project: the Mammalian Gene Collection (MGC).</title>
        <authorList>
            <consortium name="The MGC Project Team"/>
        </authorList>
    </citation>
    <scope>NUCLEOTIDE SEQUENCE [LARGE SCALE MRNA]</scope>
    <source>
        <strain>FVB/N</strain>
        <tissue>Colon</tissue>
    </source>
</reference>
<reference key="6">
    <citation type="journal article" date="2003" name="J. Clin. Invest.">
        <title>Cardiac hypertrophy and histone deacetylase-dependent transcriptional repression mediated by the atypical homeodomain protein Hop.</title>
        <authorList>
            <person name="Kook H."/>
            <person name="Lepore J.J."/>
            <person name="Gitler A.D."/>
            <person name="Lu M.M."/>
            <person name="Yung W.W.-M."/>
            <person name="Mackay J."/>
            <person name="Zhou R."/>
            <person name="Ferrari V."/>
            <person name="Gruber P."/>
            <person name="Epstein J.A."/>
        </authorList>
    </citation>
    <scope>INTERACTION WITH HDAC2</scope>
</reference>
<reference key="7">
    <citation type="journal article" date="2010" name="Cell">
        <title>A tissue-specific atlas of mouse protein phosphorylation and expression.</title>
        <authorList>
            <person name="Huttlin E.L."/>
            <person name="Jedrychowski M.P."/>
            <person name="Elias J.E."/>
            <person name="Goswami T."/>
            <person name="Rad R."/>
            <person name="Beausoleil S.A."/>
            <person name="Villen J."/>
            <person name="Haas W."/>
            <person name="Sowa M.E."/>
            <person name="Gygi S.P."/>
        </authorList>
    </citation>
    <scope>IDENTIFICATION BY MASS SPECTROMETRY [LARGE SCALE ANALYSIS]</scope>
    <source>
        <tissue>Brain</tissue>
        <tissue>Lung</tissue>
    </source>
</reference>
<reference key="8">
    <citation type="submission" date="2004-07" db="PDB data bank">
        <title>Solution structure of mouse homeodomain-only protein Hop.</title>
        <authorList>
            <consortium name="RIKEN structural genomics initiative (RSGI)"/>
        </authorList>
    </citation>
    <scope>STRUCTURE BY NMR OF 10-73</scope>
</reference>
<protein>
    <recommendedName>
        <fullName>Homeodomain-only protein</fullName>
    </recommendedName>
    <alternativeName>
        <fullName>Homeobox-only protein</fullName>
    </alternativeName>
    <alternativeName>
        <fullName>Odd homeobox protein 1</fullName>
        <shortName>mOB1</shortName>
    </alternativeName>
</protein>
<gene>
    <name type="primary">Hopx</name>
    <name type="synonym">Hod</name>
    <name type="synonym">Hop</name>
    <name type="synonym">Ob1</name>
</gene>
<dbReference type="EMBL" id="AF536202">
    <property type="protein sequence ID" value="AAN16320.1"/>
    <property type="molecule type" value="mRNA"/>
</dbReference>
<dbReference type="EMBL" id="AF534182">
    <property type="protein sequence ID" value="AAN05634.1"/>
    <property type="molecule type" value="mRNA"/>
</dbReference>
<dbReference type="EMBL" id="AF492703">
    <property type="protein sequence ID" value="AAM46823.1"/>
    <property type="molecule type" value="mRNA"/>
</dbReference>
<dbReference type="EMBL" id="AF492704">
    <property type="protein sequence ID" value="AAM46824.1"/>
    <property type="molecule type" value="mRNA"/>
</dbReference>
<dbReference type="EMBL" id="AK003784">
    <property type="protein sequence ID" value="BAC25054.1"/>
    <property type="molecule type" value="mRNA"/>
</dbReference>
<dbReference type="EMBL" id="AK004798">
    <property type="protein sequence ID" value="BAC25097.1"/>
    <property type="molecule type" value="mRNA"/>
</dbReference>
<dbReference type="EMBL" id="AK008297">
    <property type="protein sequence ID" value="BAC25214.1"/>
    <property type="molecule type" value="mRNA"/>
</dbReference>
<dbReference type="EMBL" id="AK008439">
    <property type="protein sequence ID" value="BAC25219.1"/>
    <property type="molecule type" value="mRNA"/>
</dbReference>
<dbReference type="EMBL" id="AK009007">
    <property type="protein sequence ID" value="BAC25235.1"/>
    <property type="molecule type" value="mRNA"/>
</dbReference>
<dbReference type="EMBL" id="BC024546">
    <property type="protein sequence ID" value="AAH24546.1"/>
    <property type="molecule type" value="mRNA"/>
</dbReference>
<dbReference type="CCDS" id="CCDS39120.1"/>
<dbReference type="RefSeq" id="NP_001153372.1">
    <property type="nucleotide sequence ID" value="NM_001159900.1"/>
</dbReference>
<dbReference type="RefSeq" id="NP_001153373.1">
    <property type="nucleotide sequence ID" value="NM_001159901.1"/>
</dbReference>
<dbReference type="RefSeq" id="NP_783199.1">
    <property type="nucleotide sequence ID" value="NM_175606.3"/>
</dbReference>
<dbReference type="RefSeq" id="XP_036021457.1">
    <property type="nucleotide sequence ID" value="XM_036165564.1"/>
</dbReference>
<dbReference type="PDB" id="1UHS">
    <property type="method" value="NMR"/>
    <property type="chains" value="A=10-73"/>
</dbReference>
<dbReference type="PDB" id="2HI3">
    <property type="method" value="NMR"/>
    <property type="chains" value="A=1-73"/>
</dbReference>
<dbReference type="PDBsum" id="1UHS"/>
<dbReference type="PDBsum" id="2HI3"/>
<dbReference type="BMRB" id="Q8R1H0"/>
<dbReference type="SMR" id="Q8R1H0"/>
<dbReference type="BioGRID" id="216662">
    <property type="interactions" value="2"/>
</dbReference>
<dbReference type="CORUM" id="Q8R1H0"/>
<dbReference type="DIP" id="DIP-61663N"/>
<dbReference type="FunCoup" id="Q8R1H0">
    <property type="interactions" value="1304"/>
</dbReference>
<dbReference type="IntAct" id="Q8R1H0">
    <property type="interactions" value="9"/>
</dbReference>
<dbReference type="STRING" id="10090.ENSMUSP00000080630"/>
<dbReference type="GlyGen" id="Q8R1H0">
    <property type="glycosylation" value="1 site"/>
</dbReference>
<dbReference type="iPTMnet" id="Q8R1H0"/>
<dbReference type="PhosphoSitePlus" id="Q8R1H0"/>
<dbReference type="SwissPalm" id="Q8R1H0"/>
<dbReference type="PaxDb" id="10090-ENSMUSP00000080630"/>
<dbReference type="PeptideAtlas" id="Q8R1H0"/>
<dbReference type="ProteomicsDB" id="273130"/>
<dbReference type="Antibodypedia" id="24043">
    <property type="antibodies" value="266 antibodies from 30 providers"/>
</dbReference>
<dbReference type="DNASU" id="74318"/>
<dbReference type="Ensembl" id="ENSMUST00000081964.7">
    <property type="protein sequence ID" value="ENSMUSP00000080630.5"/>
    <property type="gene ID" value="ENSMUSG00000059325.15"/>
</dbReference>
<dbReference type="Ensembl" id="ENSMUST00000113453.9">
    <property type="protein sequence ID" value="ENSMUSP00000109080.3"/>
    <property type="gene ID" value="ENSMUSG00000059325.15"/>
</dbReference>
<dbReference type="Ensembl" id="ENSMUST00000120827.9">
    <property type="protein sequence ID" value="ENSMUSP00000113295.3"/>
    <property type="gene ID" value="ENSMUSG00000059325.15"/>
</dbReference>
<dbReference type="GeneID" id="74318"/>
<dbReference type="KEGG" id="mmu:74318"/>
<dbReference type="UCSC" id="uc008xvv.2">
    <property type="organism name" value="mouse"/>
</dbReference>
<dbReference type="AGR" id="MGI:1916782"/>
<dbReference type="CTD" id="84525"/>
<dbReference type="MGI" id="MGI:1916782">
    <property type="gene designation" value="Hopx"/>
</dbReference>
<dbReference type="VEuPathDB" id="HostDB:ENSMUSG00000059325"/>
<dbReference type="eggNOG" id="KOG0490">
    <property type="taxonomic scope" value="Eukaryota"/>
</dbReference>
<dbReference type="GeneTree" id="ENSGT00390000017143"/>
<dbReference type="HOGENOM" id="CLU_193231_0_0_1"/>
<dbReference type="InParanoid" id="Q8R1H0"/>
<dbReference type="OMA" id="LRMAKWR"/>
<dbReference type="OrthoDB" id="6159439at2759"/>
<dbReference type="PhylomeDB" id="Q8R1H0"/>
<dbReference type="TreeFam" id="TF330730"/>
<dbReference type="BioGRID-ORCS" id="74318">
    <property type="hits" value="4 hits in 80 CRISPR screens"/>
</dbReference>
<dbReference type="ChiTaRS" id="Hopx">
    <property type="organism name" value="mouse"/>
</dbReference>
<dbReference type="EvolutionaryTrace" id="Q8R1H0"/>
<dbReference type="PRO" id="PR:Q8R1H0"/>
<dbReference type="Proteomes" id="UP000000589">
    <property type="component" value="Chromosome 5"/>
</dbReference>
<dbReference type="RNAct" id="Q8R1H0">
    <property type="molecule type" value="protein"/>
</dbReference>
<dbReference type="Bgee" id="ENSMUSG00000059325">
    <property type="expression patterns" value="Expressed in right lung lobe and 259 other cell types or tissues"/>
</dbReference>
<dbReference type="GO" id="GO:0005737">
    <property type="term" value="C:cytoplasm"/>
    <property type="evidence" value="ECO:0007669"/>
    <property type="project" value="UniProtKB-SubCell"/>
</dbReference>
<dbReference type="GO" id="GO:0005634">
    <property type="term" value="C:nucleus"/>
    <property type="evidence" value="ECO:0000314"/>
    <property type="project" value="MGI"/>
</dbReference>
<dbReference type="GO" id="GO:0003677">
    <property type="term" value="F:DNA binding"/>
    <property type="evidence" value="ECO:0007669"/>
    <property type="project" value="UniProtKB-KW"/>
</dbReference>
<dbReference type="GO" id="GO:0035033">
    <property type="term" value="F:histone deacetylase regulator activity"/>
    <property type="evidence" value="ECO:0000316"/>
    <property type="project" value="MGI"/>
</dbReference>
<dbReference type="GO" id="GO:0051131">
    <property type="term" value="P:chaperone-mediated protein complex assembly"/>
    <property type="evidence" value="ECO:0007669"/>
    <property type="project" value="Ensembl"/>
</dbReference>
<dbReference type="GO" id="GO:0007507">
    <property type="term" value="P:heart development"/>
    <property type="evidence" value="ECO:0000315"/>
    <property type="project" value="MGI"/>
</dbReference>
<dbReference type="GO" id="GO:0048286">
    <property type="term" value="P:lung alveolus development"/>
    <property type="evidence" value="ECO:0000315"/>
    <property type="project" value="MGI"/>
</dbReference>
<dbReference type="GO" id="GO:0045596">
    <property type="term" value="P:negative regulation of cell differentiation"/>
    <property type="evidence" value="ECO:0000266"/>
    <property type="project" value="MGI"/>
</dbReference>
<dbReference type="GO" id="GO:0000122">
    <property type="term" value="P:negative regulation of transcription by RNA polymerase II"/>
    <property type="evidence" value="ECO:0000314"/>
    <property type="project" value="MGI"/>
</dbReference>
<dbReference type="GO" id="GO:1903598">
    <property type="term" value="P:positive regulation of gap junction assembly"/>
    <property type="evidence" value="ECO:0000315"/>
    <property type="project" value="BHF-UCL"/>
</dbReference>
<dbReference type="GO" id="GO:0043415">
    <property type="term" value="P:positive regulation of skeletal muscle tissue regeneration"/>
    <property type="evidence" value="ECO:0000315"/>
    <property type="project" value="MGI"/>
</dbReference>
<dbReference type="GO" id="GO:0051155">
    <property type="term" value="P:positive regulation of striated muscle cell differentiation"/>
    <property type="evidence" value="ECO:0000315"/>
    <property type="project" value="MGI"/>
</dbReference>
<dbReference type="GO" id="GO:0008016">
    <property type="term" value="P:regulation of heart contraction"/>
    <property type="evidence" value="ECO:0000315"/>
    <property type="project" value="MGI"/>
</dbReference>
<dbReference type="GO" id="GO:0001829">
    <property type="term" value="P:trophectodermal cell differentiation"/>
    <property type="evidence" value="ECO:0000315"/>
    <property type="project" value="MGI"/>
</dbReference>
<dbReference type="CDD" id="cd00086">
    <property type="entry name" value="homeodomain"/>
    <property type="match status" value="1"/>
</dbReference>
<dbReference type="FunFam" id="1.10.10.60:FF:000213">
    <property type="entry name" value="Homeodomain-only protein"/>
    <property type="match status" value="1"/>
</dbReference>
<dbReference type="Gene3D" id="1.10.10.60">
    <property type="entry name" value="Homeodomain-like"/>
    <property type="match status" value="1"/>
</dbReference>
<dbReference type="InterPro" id="IPR001356">
    <property type="entry name" value="HD"/>
</dbReference>
<dbReference type="InterPro" id="IPR009057">
    <property type="entry name" value="Homeodomain-like_sf"/>
</dbReference>
<dbReference type="InterPro" id="IPR039162">
    <property type="entry name" value="HOPX"/>
</dbReference>
<dbReference type="PANTHER" id="PTHR21408">
    <property type="entry name" value="HOMEODOMAIN-ONLY PROTEIN"/>
    <property type="match status" value="1"/>
</dbReference>
<dbReference type="PANTHER" id="PTHR21408:SF1">
    <property type="entry name" value="HOMEODOMAIN-ONLY PROTEIN"/>
    <property type="match status" value="1"/>
</dbReference>
<dbReference type="Pfam" id="PF00046">
    <property type="entry name" value="Homeodomain"/>
    <property type="match status" value="1"/>
</dbReference>
<dbReference type="SMART" id="SM00389">
    <property type="entry name" value="HOX"/>
    <property type="match status" value="1"/>
</dbReference>
<dbReference type="SUPFAM" id="SSF46689">
    <property type="entry name" value="Homeodomain-like"/>
    <property type="match status" value="1"/>
</dbReference>
<dbReference type="PROSITE" id="PS50071">
    <property type="entry name" value="HOMEOBOX_2"/>
    <property type="match status" value="1"/>
</dbReference>
<keyword id="KW-0002">3D-structure</keyword>
<keyword id="KW-0963">Cytoplasm</keyword>
<keyword id="KW-0217">Developmental protein</keyword>
<keyword id="KW-0371">Homeobox</keyword>
<keyword id="KW-0539">Nucleus</keyword>
<keyword id="KW-1185">Reference proteome</keyword>
<keyword id="KW-0678">Repressor</keyword>
<keyword id="KW-0804">Transcription</keyword>
<keyword id="KW-0805">Transcription regulation</keyword>
<comment type="function">
    <text evidence="1 3 4">Atypical homeodomain protein which does not bind DNA and is required to modulate cardiac growth and development. Acts via its interaction with SRF, thereby modulating the expression of SRF-dependent cardiac-specific genes and cardiac development. Prevents SRF-dependent transcription either by inhibiting SRF binding to DNA or by recruiting histone deacetylase (HDAC) proteins that prevent transcription by SRF. Overexpression causes cardiac hypertrophy (PubMed:12297045, PubMed:12297046). Acts as a co-chaperone for HSPA1A and HSPA1B chaperone proteins and assists in chaperone-mediated protein refolding (By similarity).</text>
</comment>
<comment type="subunit">
    <text evidence="1 3 4 5">Interacts with serum response factor (SRF) (PubMed:12297045, PubMed:12297046). Component of a large complex containing histone deacetylases such as HDAC2 (PubMed:12975471). Interacts with the acetylated forms of HSPA1A and HSPA1B. Interacts with HSPA8 (By similarity).</text>
</comment>
<comment type="interaction">
    <interactant intactId="EBI-6913924">
        <id>Q8R1H0</id>
    </interactant>
    <interactant intactId="EBI-5259270">
        <id>P97471</id>
        <label>Smad4</label>
    </interactant>
    <organismsDiffer>false</organismsDiffer>
    <experiments>2</experiments>
</comment>
<comment type="subcellular location">
    <subcellularLocation>
        <location evidence="3">Nucleus</location>
    </subcellularLocation>
    <subcellularLocation>
        <location evidence="6">Cytoplasm</location>
    </subcellularLocation>
    <text evidence="6">According to PubMed:14516659 it is cytoplasmic.</text>
</comment>
<comment type="tissue specificity">
    <text evidence="3 4 6">Expressed in the embryonic and adult heart and in the adult brain, liver, lung, skeletal muscle, intestine and spleen. Throughout embryonic and postnatal development, it is expressed in the myocardium.</text>
</comment>
<comment type="developmental stage">
    <text evidence="3 4 6">First detected at 7.75 dpc in trophoblasts within extraembryonic membranes, in the lateral wings of the cardiac crescent and in the anterior head folds. At 8.0 dpc, it is expressed along the length of the linear heart tube and in the head folds. Expressed throughout the myocardium at 9.5 dpc and in the branchial arches. At 12.5 dpc, it is expressed in the heart and in the ventricular zone of the neural tube. At 13.5 dpc, it is weakly expressed in the intestinal epithelium. At 13.5 dpc and 15.5 dpc, it is also expressed in skeletal muscle, stratified epithelium (upper aerodigestive tract and skin), epithelium of developing airways, vibrissae, midbrain/hindbrain junction, meninges, mesenchymal cellular condensations that preceded cartilage formation and chondrocytes.</text>
</comment>
<comment type="induction">
    <text evidence="3">By the transcription factor NKX2-5 that acts as a direct regulator.</text>
</comment>
<comment type="disruption phenotype">
    <text evidence="3 4">Mice display partial embryonic lethality and heart failure.</text>
</comment>
<proteinExistence type="evidence at protein level"/>
<feature type="chain" id="PRO_0000049130" description="Homeodomain-only protein">
    <location>
        <begin position="1"/>
        <end position="73"/>
    </location>
</feature>
<feature type="DNA-binding region" description="Homeobox; degenerate" evidence="2">
    <location>
        <begin position="3"/>
        <end position="62"/>
    </location>
</feature>
<feature type="mutagenesis site" description="In H2; induces a strong reduction in interaction with SRF and subsequent ability to prevent transcription of cardiac-specific genes." evidence="3">
    <original>LIAAE</original>
    <variation>AAASM</variation>
    <location>
        <begin position="35"/>
        <end position="39"/>
    </location>
</feature>
<feature type="mutagenesis site" description="In H3; does not affect the interaction with SRF and keeps its ability to prevent transcription of cardiac-specific genes." evidence="3">
    <original>KWFKQ</original>
    <variation>AAASM</variation>
    <location>
        <begin position="49"/>
        <end position="53"/>
    </location>
</feature>
<feature type="sequence conflict" description="In Ref. 4; BAC25235." evidence="7" ref="4">
    <original>A</original>
    <variation>P</variation>
    <location>
        <position position="6"/>
    </location>
</feature>
<feature type="sequence conflict" description="In Ref. 1; AAN16320." evidence="7" ref="1">
    <original>A</original>
    <variation>V</variation>
    <location>
        <position position="6"/>
    </location>
</feature>
<feature type="helix" evidence="8">
    <location>
        <begin position="11"/>
        <end position="22"/>
    </location>
</feature>
<feature type="helix" evidence="8">
    <location>
        <begin position="30"/>
        <end position="40"/>
    </location>
</feature>
<feature type="helix" evidence="8">
    <location>
        <begin position="44"/>
        <end position="62"/>
    </location>
</feature>
<feature type="strand" evidence="9">
    <location>
        <begin position="66"/>
        <end position="68"/>
    </location>
</feature>
<evidence type="ECO:0000250" key="1">
    <source>
        <dbReference type="UniProtKB" id="Q9BPY8"/>
    </source>
</evidence>
<evidence type="ECO:0000255" key="2">
    <source>
        <dbReference type="PROSITE-ProRule" id="PRU00108"/>
    </source>
</evidence>
<evidence type="ECO:0000269" key="3">
    <source>
    </source>
</evidence>
<evidence type="ECO:0000269" key="4">
    <source>
    </source>
</evidence>
<evidence type="ECO:0000269" key="5">
    <source>
    </source>
</evidence>
<evidence type="ECO:0000269" key="6">
    <source>
    </source>
</evidence>
<evidence type="ECO:0000305" key="7"/>
<evidence type="ECO:0007829" key="8">
    <source>
        <dbReference type="PDB" id="1UHS"/>
    </source>
</evidence>
<evidence type="ECO:0007829" key="9">
    <source>
        <dbReference type="PDB" id="2HI3"/>
    </source>
</evidence>
<organism>
    <name type="scientific">Mus musculus</name>
    <name type="common">Mouse</name>
    <dbReference type="NCBI Taxonomy" id="10090"/>
    <lineage>
        <taxon>Eukaryota</taxon>
        <taxon>Metazoa</taxon>
        <taxon>Chordata</taxon>
        <taxon>Craniata</taxon>
        <taxon>Vertebrata</taxon>
        <taxon>Euteleostomi</taxon>
        <taxon>Mammalia</taxon>
        <taxon>Eutheria</taxon>
        <taxon>Euarchontoglires</taxon>
        <taxon>Glires</taxon>
        <taxon>Rodentia</taxon>
        <taxon>Myomorpha</taxon>
        <taxon>Muroidea</taxon>
        <taxon>Muridae</taxon>
        <taxon>Murinae</taxon>
        <taxon>Mus</taxon>
        <taxon>Mus</taxon>
    </lineage>
</organism>
<sequence length="73" mass="8282">MSAQTASGPTEDQVEILEYNFNKVNKHPDPTTLCLIAAEAGLTEEQTQKWFKQRLAEWRRSEGLPSECRSVTD</sequence>
<name>HOP_MOUSE</name>
<accession>Q8R1H0</accession>
<accession>Q8C1N5</accession>
<accession>Q8CJ22</accession>